<gene>
    <name evidence="1" type="primary">rpsC</name>
    <name type="ordered locus">CAB099</name>
</gene>
<evidence type="ECO:0000255" key="1">
    <source>
        <dbReference type="HAMAP-Rule" id="MF_01309"/>
    </source>
</evidence>
<evidence type="ECO:0000305" key="2"/>
<sequence>MGQKGCPIGFRTGVTKKWRSLWYGNKQEFGKFLIEDVKIREFLRKKPSCQGAAGFVVRRMSGKIEVTIQTARPGLVIGKKGAEVDLLKEELRKLTGKEVWVEIAEIKRPELNAKLVADNIARQIERRVSFRRAMKKAMQSVMDAGAVGVKIQVSGRLAGAEIARSEWYKNGRVPLHTLRADIDYAAASAATTYGIIGVKVWINLGEKASTASSNVGTAAPVVQ</sequence>
<protein>
    <recommendedName>
        <fullName evidence="1">Small ribosomal subunit protein uS3</fullName>
    </recommendedName>
    <alternativeName>
        <fullName evidence="2">30S ribosomal protein S3</fullName>
    </alternativeName>
</protein>
<accession>Q5L714</accession>
<dbReference type="EMBL" id="CR848038">
    <property type="protein sequence ID" value="CAH63556.1"/>
    <property type="molecule type" value="Genomic_DNA"/>
</dbReference>
<dbReference type="RefSeq" id="WP_011096827.1">
    <property type="nucleotide sequence ID" value="NC_004552.2"/>
</dbReference>
<dbReference type="SMR" id="Q5L714"/>
<dbReference type="KEGG" id="cab:CAB099"/>
<dbReference type="eggNOG" id="COG0092">
    <property type="taxonomic scope" value="Bacteria"/>
</dbReference>
<dbReference type="HOGENOM" id="CLU_058591_0_2_0"/>
<dbReference type="OrthoDB" id="9806396at2"/>
<dbReference type="Proteomes" id="UP000001012">
    <property type="component" value="Chromosome"/>
</dbReference>
<dbReference type="GO" id="GO:0022627">
    <property type="term" value="C:cytosolic small ribosomal subunit"/>
    <property type="evidence" value="ECO:0007669"/>
    <property type="project" value="TreeGrafter"/>
</dbReference>
<dbReference type="GO" id="GO:0003729">
    <property type="term" value="F:mRNA binding"/>
    <property type="evidence" value="ECO:0007669"/>
    <property type="project" value="UniProtKB-UniRule"/>
</dbReference>
<dbReference type="GO" id="GO:0019843">
    <property type="term" value="F:rRNA binding"/>
    <property type="evidence" value="ECO:0007669"/>
    <property type="project" value="UniProtKB-UniRule"/>
</dbReference>
<dbReference type="GO" id="GO:0003735">
    <property type="term" value="F:structural constituent of ribosome"/>
    <property type="evidence" value="ECO:0007669"/>
    <property type="project" value="InterPro"/>
</dbReference>
<dbReference type="GO" id="GO:0006412">
    <property type="term" value="P:translation"/>
    <property type="evidence" value="ECO:0007669"/>
    <property type="project" value="UniProtKB-UniRule"/>
</dbReference>
<dbReference type="CDD" id="cd02412">
    <property type="entry name" value="KH-II_30S_S3"/>
    <property type="match status" value="1"/>
</dbReference>
<dbReference type="FunFam" id="3.30.300.20:FF:000001">
    <property type="entry name" value="30S ribosomal protein S3"/>
    <property type="match status" value="1"/>
</dbReference>
<dbReference type="Gene3D" id="3.30.300.20">
    <property type="match status" value="1"/>
</dbReference>
<dbReference type="Gene3D" id="3.30.1140.32">
    <property type="entry name" value="Ribosomal protein S3, C-terminal domain"/>
    <property type="match status" value="1"/>
</dbReference>
<dbReference type="HAMAP" id="MF_01309_B">
    <property type="entry name" value="Ribosomal_uS3_B"/>
    <property type="match status" value="1"/>
</dbReference>
<dbReference type="InterPro" id="IPR004087">
    <property type="entry name" value="KH_dom"/>
</dbReference>
<dbReference type="InterPro" id="IPR015946">
    <property type="entry name" value="KH_dom-like_a/b"/>
</dbReference>
<dbReference type="InterPro" id="IPR004044">
    <property type="entry name" value="KH_dom_type_2"/>
</dbReference>
<dbReference type="InterPro" id="IPR009019">
    <property type="entry name" value="KH_sf_prok-type"/>
</dbReference>
<dbReference type="InterPro" id="IPR036419">
    <property type="entry name" value="Ribosomal_S3_C_sf"/>
</dbReference>
<dbReference type="InterPro" id="IPR005704">
    <property type="entry name" value="Ribosomal_uS3_bac-typ"/>
</dbReference>
<dbReference type="InterPro" id="IPR001351">
    <property type="entry name" value="Ribosomal_uS3_C"/>
</dbReference>
<dbReference type="InterPro" id="IPR018280">
    <property type="entry name" value="Ribosomal_uS3_CS"/>
</dbReference>
<dbReference type="NCBIfam" id="TIGR01009">
    <property type="entry name" value="rpsC_bact"/>
    <property type="match status" value="1"/>
</dbReference>
<dbReference type="PANTHER" id="PTHR11760">
    <property type="entry name" value="30S/40S RIBOSOMAL PROTEIN S3"/>
    <property type="match status" value="1"/>
</dbReference>
<dbReference type="PANTHER" id="PTHR11760:SF19">
    <property type="entry name" value="SMALL RIBOSOMAL SUBUNIT PROTEIN US3C"/>
    <property type="match status" value="1"/>
</dbReference>
<dbReference type="Pfam" id="PF07650">
    <property type="entry name" value="KH_2"/>
    <property type="match status" value="1"/>
</dbReference>
<dbReference type="Pfam" id="PF00189">
    <property type="entry name" value="Ribosomal_S3_C"/>
    <property type="match status" value="1"/>
</dbReference>
<dbReference type="SMART" id="SM00322">
    <property type="entry name" value="KH"/>
    <property type="match status" value="1"/>
</dbReference>
<dbReference type="SUPFAM" id="SSF54814">
    <property type="entry name" value="Prokaryotic type KH domain (KH-domain type II)"/>
    <property type="match status" value="1"/>
</dbReference>
<dbReference type="SUPFAM" id="SSF54821">
    <property type="entry name" value="Ribosomal protein S3 C-terminal domain"/>
    <property type="match status" value="1"/>
</dbReference>
<dbReference type="PROSITE" id="PS50823">
    <property type="entry name" value="KH_TYPE_2"/>
    <property type="match status" value="1"/>
</dbReference>
<dbReference type="PROSITE" id="PS00548">
    <property type="entry name" value="RIBOSOMAL_S3"/>
    <property type="match status" value="1"/>
</dbReference>
<name>RS3_CHLAB</name>
<feature type="chain" id="PRO_0000230689" description="Small ribosomal subunit protein uS3">
    <location>
        <begin position="1"/>
        <end position="223"/>
    </location>
</feature>
<feature type="domain" description="KH type-2" evidence="1">
    <location>
        <begin position="39"/>
        <end position="117"/>
    </location>
</feature>
<proteinExistence type="inferred from homology"/>
<organism>
    <name type="scientific">Chlamydia abortus (strain DSM 27085 / S26/3)</name>
    <name type="common">Chlamydophila abortus</name>
    <dbReference type="NCBI Taxonomy" id="218497"/>
    <lineage>
        <taxon>Bacteria</taxon>
        <taxon>Pseudomonadati</taxon>
        <taxon>Chlamydiota</taxon>
        <taxon>Chlamydiia</taxon>
        <taxon>Chlamydiales</taxon>
        <taxon>Chlamydiaceae</taxon>
        <taxon>Chlamydia/Chlamydophila group</taxon>
        <taxon>Chlamydia</taxon>
    </lineage>
</organism>
<comment type="function">
    <text evidence="1">Binds the lower part of the 30S subunit head. Binds mRNA in the 70S ribosome, positioning it for translation.</text>
</comment>
<comment type="subunit">
    <text evidence="1">Part of the 30S ribosomal subunit. Forms a tight complex with proteins S10 and S14.</text>
</comment>
<comment type="similarity">
    <text evidence="1">Belongs to the universal ribosomal protein uS3 family.</text>
</comment>
<keyword id="KW-0687">Ribonucleoprotein</keyword>
<keyword id="KW-0689">Ribosomal protein</keyword>
<keyword id="KW-0694">RNA-binding</keyword>
<keyword id="KW-0699">rRNA-binding</keyword>
<reference key="1">
    <citation type="journal article" date="2005" name="Genome Res.">
        <title>The Chlamydophila abortus genome sequence reveals an array of variable proteins that contribute to interspecies variation.</title>
        <authorList>
            <person name="Thomson N.R."/>
            <person name="Yeats C."/>
            <person name="Bell K."/>
            <person name="Holden M.T.G."/>
            <person name="Bentley S.D."/>
            <person name="Livingstone M."/>
            <person name="Cerdeno-Tarraga A.-M."/>
            <person name="Harris B."/>
            <person name="Doggett J."/>
            <person name="Ormond D."/>
            <person name="Mungall K."/>
            <person name="Clarke K."/>
            <person name="Feltwell T."/>
            <person name="Hance Z."/>
            <person name="Sanders M."/>
            <person name="Quail M.A."/>
            <person name="Price C."/>
            <person name="Barrell B.G."/>
            <person name="Parkhill J."/>
            <person name="Longbottom D."/>
        </authorList>
    </citation>
    <scope>NUCLEOTIDE SEQUENCE [LARGE SCALE GENOMIC DNA]</scope>
    <source>
        <strain>DSM 27085 / S26/3</strain>
    </source>
</reference>